<evidence type="ECO:0000255" key="1">
    <source>
        <dbReference type="HAMAP-Rule" id="MF_04070"/>
    </source>
</evidence>
<evidence type="ECO:0000256" key="2">
    <source>
        <dbReference type="SAM" id="MobiDB-lite"/>
    </source>
</evidence>
<accession>P06827</accession>
<accession>Q1K9E0</accession>
<dbReference type="EMBL" id="M14922">
    <property type="protein sequence ID" value="AAA43686.1"/>
    <property type="molecule type" value="Genomic_RNA"/>
</dbReference>
<dbReference type="EMBL" id="D00051">
    <property type="protein sequence ID" value="BAA00035.1"/>
    <property type="molecule type" value="Genomic_RNA"/>
</dbReference>
<dbReference type="EMBL" id="DQ508930">
    <property type="protein sequence ID" value="ABF21295.1"/>
    <property type="molecule type" value="Genomic_RNA"/>
</dbReference>
<dbReference type="PIR" id="B25612">
    <property type="entry name" value="VHIVA7"/>
</dbReference>
<dbReference type="SMR" id="P06827"/>
<dbReference type="IntAct" id="P06827">
    <property type="interactions" value="9"/>
</dbReference>
<dbReference type="PRO" id="PR:P06827"/>
<dbReference type="Proteomes" id="UP000153055">
    <property type="component" value="Genome"/>
</dbReference>
<dbReference type="GO" id="GO:0019029">
    <property type="term" value="C:helical viral capsid"/>
    <property type="evidence" value="ECO:0007669"/>
    <property type="project" value="UniProtKB-UniRule"/>
</dbReference>
<dbReference type="GO" id="GO:0043657">
    <property type="term" value="C:host cell"/>
    <property type="evidence" value="ECO:0007669"/>
    <property type="project" value="GOC"/>
</dbReference>
<dbReference type="GO" id="GO:0042025">
    <property type="term" value="C:host cell nucleus"/>
    <property type="evidence" value="ECO:0007669"/>
    <property type="project" value="UniProtKB-SubCell"/>
</dbReference>
<dbReference type="GO" id="GO:1990904">
    <property type="term" value="C:ribonucleoprotein complex"/>
    <property type="evidence" value="ECO:0007669"/>
    <property type="project" value="UniProtKB-KW"/>
</dbReference>
<dbReference type="GO" id="GO:0019013">
    <property type="term" value="C:viral nucleocapsid"/>
    <property type="evidence" value="ECO:0007669"/>
    <property type="project" value="UniProtKB-UniRule"/>
</dbReference>
<dbReference type="GO" id="GO:0003723">
    <property type="term" value="F:RNA binding"/>
    <property type="evidence" value="ECO:0007669"/>
    <property type="project" value="UniProtKB-UniRule"/>
</dbReference>
<dbReference type="GO" id="GO:0005198">
    <property type="term" value="F:structural molecule activity"/>
    <property type="evidence" value="ECO:0007669"/>
    <property type="project" value="UniProtKB-UniRule"/>
</dbReference>
<dbReference type="GO" id="GO:0046718">
    <property type="term" value="P:symbiont entry into host cell"/>
    <property type="evidence" value="ECO:0007669"/>
    <property type="project" value="UniProtKB-KW"/>
</dbReference>
<dbReference type="GO" id="GO:0075732">
    <property type="term" value="P:viral penetration into host nucleus"/>
    <property type="evidence" value="ECO:0007669"/>
    <property type="project" value="UniProtKB-UniRule"/>
</dbReference>
<dbReference type="HAMAP" id="MF_04070">
    <property type="entry name" value="INFV_NCAP"/>
    <property type="match status" value="1"/>
</dbReference>
<dbReference type="InterPro" id="IPR002141">
    <property type="entry name" value="Flu_NP"/>
</dbReference>
<dbReference type="Pfam" id="PF00506">
    <property type="entry name" value="Flu_NP"/>
    <property type="match status" value="1"/>
</dbReference>
<dbReference type="SUPFAM" id="SSF161003">
    <property type="entry name" value="flu NP-like"/>
    <property type="match status" value="1"/>
</dbReference>
<protein>
    <recommendedName>
        <fullName evidence="1">Nucleoprotein</fullName>
    </recommendedName>
    <alternativeName>
        <fullName evidence="1">Nucleocapsid protein</fullName>
        <shortName evidence="1">Protein N</shortName>
    </alternativeName>
</protein>
<gene>
    <name evidence="1" type="primary">NP</name>
</gene>
<keyword id="KW-0167">Capsid protein</keyword>
<keyword id="KW-1139">Helical capsid protein</keyword>
<keyword id="KW-1048">Host nucleus</keyword>
<keyword id="KW-0945">Host-virus interaction</keyword>
<keyword id="KW-0687">Ribonucleoprotein</keyword>
<keyword id="KW-0694">RNA-binding</keyword>
<keyword id="KW-0543">Viral nucleoprotein</keyword>
<keyword id="KW-1163">Viral penetration into host nucleus</keyword>
<keyword id="KW-0946">Virion</keyword>
<keyword id="KW-1160">Virus entry into host cell</keyword>
<feature type="chain" id="PRO_0000079108" description="Nucleoprotein">
    <location>
        <begin position="1"/>
        <end position="498"/>
    </location>
</feature>
<feature type="region of interest" description="Disordered" evidence="2">
    <location>
        <begin position="1"/>
        <end position="21"/>
    </location>
</feature>
<feature type="short sequence motif" description="Unconventional nuclear localization signal" evidence="1">
    <location>
        <begin position="1"/>
        <end position="18"/>
    </location>
</feature>
<feature type="short sequence motif" description="Bipartite nuclear localization signal" evidence="1">
    <location>
        <begin position="198"/>
        <end position="216"/>
    </location>
</feature>
<feature type="compositionally biased region" description="Basic and acidic residues" evidence="2">
    <location>
        <begin position="8"/>
        <end position="21"/>
    </location>
</feature>
<feature type="sequence conflict" description="In Ref. 1; AAA43686/BAA00035." ref="1">
    <original>G</original>
    <variation>R</variation>
    <location>
        <position position="102"/>
    </location>
</feature>
<proteinExistence type="inferred from homology"/>
<reference key="1">
    <citation type="journal article" date="1986" name="Virology">
        <title>Nucleotide sequence analysis of the nucleoprotein gene of an avian and a human influenza virus strain identifies two classes of nucleoproteins.</title>
        <authorList>
            <person name="Buckler-White A.J."/>
            <person name="Murphy B.R."/>
        </authorList>
    </citation>
    <scope>NUCLEOTIDE SEQUENCE [GENOMIC RNA]</scope>
</reference>
<reference key="2">
    <citation type="submission" date="2006-04" db="EMBL/GenBank/DDBJ databases">
        <title>Complete genome sequencing and analysis of selected Influenza Virus vaccine strains spanning six decades (1933-1999).</title>
        <authorList>
            <person name="Mbawuike I.N."/>
            <person name="Zhang Y."/>
            <person name="Yamada R.E."/>
            <person name="Nino D."/>
            <person name="Bui H.-H."/>
            <person name="Sette A."/>
            <person name="Couch R.B."/>
        </authorList>
    </citation>
    <scope>NUCLEOTIDE SEQUENCE [GENOMIC RNA]</scope>
</reference>
<comment type="function">
    <text evidence="1">Encapsidates the negative strand viral RNA, protecting it from nucleases. The encapsidated genomic RNA is termed the ribonucleoprotein (RNP) and serves as template for transcription and replication. The RNP needs to be localized in the host nucleus to start an infectious cycle, but is too large to diffuse through the nuclear pore complex. NP comprises at least 2 nuclear localization signals that are responsible for the active RNP import into the nucleus through cellular importin alpha/beta pathway. Later in the infection, nclear export of RNPs are mediated through viral proteins NEP interacting with M1 which binds nucleoproteins. It is possible that nucleoprotein binds directly host exportin-1/XPO1 and plays an active role in RNPs nuclear export. M1 interaction with RNP seems to hide nucleoprotein's nuclear localization signals. Soon after a virion infects a new cell, M1 dissociates from the RNP under acidification of the virion driven by M2 protein. Dissociation of M1 from RNP unmasks nucleoprotein's nuclear localization signals, targeting the RNP to the nucleus.</text>
</comment>
<comment type="subunit">
    <text evidence="1">Homomultimerizes to form the nucleocapsid. May bind host exportin-1/XPO1. Binds to viral genomic RNA. Protein-RNA contacts are mediated by a combination of electrostatic interactions between positively charged residues and the phosphate backbone and planar interactions between aromatic side chains and bases.</text>
</comment>
<comment type="subcellular location">
    <subcellularLocation>
        <location evidence="1">Virion</location>
    </subcellularLocation>
    <subcellularLocation>
        <location evidence="1">Host nucleus</location>
    </subcellularLocation>
</comment>
<comment type="PTM">
    <text evidence="1">Late in virus-infected cells, may be cleaved from a 56-kDa protein to a 53-kDa protein by a cellular caspase. This cleavage might be a marker for the onset of apoptosis in infected cells or have a specific function in virus host interaction.</text>
</comment>
<comment type="similarity">
    <text evidence="1">Belongs to the influenza viruses nucleoprotein family.</text>
</comment>
<sequence length="498" mass="56084">MASQGTKRSYEQMETDGERQNATEIRASVGKMIDGIGRFYIQMCTELKLSDYEGRLIQNSLTIERMVLSAFDERRNRYLEEHPSAGKDPKKTGGPIYKRVDGKWMRELVLYDKEEIRRIWRQANNGDDATAGLTHMMIWHSNLNDTTYQRTRALVRTGMDPRMCSLMQGSTLPRRSGAAGAAVKGVGTMVMELIRMIKRGINDRNFWRGENGRKTRGAYERMCNILKGKFQTAAQRAMMDQVRESRNPGNAEIEDLIFLARSALILRGSVAHKSCLPACVYGPAVASGYDFEKEGYSLVGIDPFKLLQNSQVYSLIRPNENPAHKSQLVWMACNSAAFEDLRLLSFIRGTKVSPRGKLSTRGVQIASNENMDTMESSTLELRSRYWAIRTRSGGNTNQQRASAGQISVQPAFSVQRNLPFDKSTIMAAFTGNTEGRTSDMRAEIIRMMEGAKPEEVSFRGRGVFELSDEKATNPIVPSFDMSNEGSYFFGDNAEEYDN</sequence>
<organismHost>
    <name type="scientific">Aves</name>
    <dbReference type="NCBI Taxonomy" id="8782"/>
</organismHost>
<organismHost>
    <name type="scientific">Cetacea</name>
    <name type="common">whales</name>
    <dbReference type="NCBI Taxonomy" id="9721"/>
</organismHost>
<organismHost>
    <name type="scientific">Homo sapiens</name>
    <name type="common">Human</name>
    <dbReference type="NCBI Taxonomy" id="9606"/>
</organismHost>
<organismHost>
    <name type="scientific">Phocidae</name>
    <name type="common">true seals</name>
    <dbReference type="NCBI Taxonomy" id="9709"/>
</organismHost>
<organismHost>
    <name type="scientific">Sus scrofa</name>
    <name type="common">Pig</name>
    <dbReference type="NCBI Taxonomy" id="9823"/>
</organismHost>
<organism>
    <name type="scientific">Influenza A virus (strain A/Udorn/307/1972 H3N2)</name>
    <dbReference type="NCBI Taxonomy" id="381517"/>
    <lineage>
        <taxon>Viruses</taxon>
        <taxon>Riboviria</taxon>
        <taxon>Orthornavirae</taxon>
        <taxon>Negarnaviricota</taxon>
        <taxon>Polyploviricotina</taxon>
        <taxon>Insthoviricetes</taxon>
        <taxon>Articulavirales</taxon>
        <taxon>Orthomyxoviridae</taxon>
        <taxon>Alphainfluenzavirus</taxon>
        <taxon>Alphainfluenzavirus influenzae</taxon>
        <taxon>Influenza A virus</taxon>
    </lineage>
</organism>
<name>NCAP_I72A2</name>